<dbReference type="EMBL" id="X06177">
    <property type="protein sequence ID" value="CAA29543.1"/>
    <property type="molecule type" value="mRNA"/>
</dbReference>
<dbReference type="EMBL" id="X06388">
    <property type="protein sequence ID" value="CAA29685.1"/>
    <property type="molecule type" value="mRNA"/>
</dbReference>
<dbReference type="EMBL" id="M58396">
    <property type="protein sequence ID" value="AAA42196.1"/>
    <property type="molecule type" value="Genomic_DNA"/>
</dbReference>
<dbReference type="EMBL" id="M58402">
    <property type="protein sequence ID" value="AAA42196.1"/>
    <property type="status" value="JOINED"/>
    <property type="molecule type" value="Genomic_DNA"/>
</dbReference>
<dbReference type="EMBL" id="M58401">
    <property type="protein sequence ID" value="AAA42196.1"/>
    <property type="status" value="JOINED"/>
    <property type="molecule type" value="Genomic_DNA"/>
</dbReference>
<dbReference type="EMBL" id="M58399">
    <property type="protein sequence ID" value="AAA42196.1"/>
    <property type="status" value="JOINED"/>
    <property type="molecule type" value="Genomic_DNA"/>
</dbReference>
<dbReference type="EMBL" id="BC099798">
    <property type="protein sequence ID" value="AAH99798.1"/>
    <property type="molecule type" value="mRNA"/>
</dbReference>
<dbReference type="EMBL" id="X06655">
    <property type="protein sequence ID" value="CAA29854.1"/>
    <property type="molecule type" value="mRNA"/>
</dbReference>
<dbReference type="PIR" id="JU0464">
    <property type="entry name" value="B27287"/>
</dbReference>
<dbReference type="RefSeq" id="NP_036796.1">
    <property type="nucleotide sequence ID" value="NM_012664.3"/>
</dbReference>
<dbReference type="PDB" id="9B8O">
    <property type="method" value="EM"/>
    <property type="resolution" value="3.20 A"/>
    <property type="chains" value="U=1-307"/>
</dbReference>
<dbReference type="PDB" id="9BRB">
    <property type="method" value="EM"/>
    <property type="resolution" value="3.60 A"/>
    <property type="chains" value="U=1-307"/>
</dbReference>
<dbReference type="PDB" id="9BRC">
    <property type="method" value="EM"/>
    <property type="resolution" value="3.90 A"/>
    <property type="chains" value="U=1-307"/>
</dbReference>
<dbReference type="PDB" id="9BRD">
    <property type="method" value="EM"/>
    <property type="resolution" value="3.50 A"/>
    <property type="chains" value="U=1-307"/>
</dbReference>
<dbReference type="PDBsum" id="9B8O"/>
<dbReference type="PDBsum" id="9BRB"/>
<dbReference type="PDBsum" id="9BRC"/>
<dbReference type="PDBsum" id="9BRD"/>
<dbReference type="EMDB" id="EMD-44350"/>
<dbReference type="SMR" id="P07825"/>
<dbReference type="BioGRID" id="246927">
    <property type="interactions" value="7"/>
</dbReference>
<dbReference type="FunCoup" id="P07825">
    <property type="interactions" value="1497"/>
</dbReference>
<dbReference type="IntAct" id="P07825">
    <property type="interactions" value="16"/>
</dbReference>
<dbReference type="MINT" id="P07825"/>
<dbReference type="STRING" id="10116.ENSRNOP00000075360"/>
<dbReference type="GlyCosmos" id="P07825">
    <property type="glycosylation" value="1 site, No reported glycans"/>
</dbReference>
<dbReference type="GlyGen" id="P07825">
    <property type="glycosylation" value="1 site, 3 N-linked glycans (1 site), 6 N-linked;o-linked glycans (1 site)"/>
</dbReference>
<dbReference type="iPTMnet" id="P07825"/>
<dbReference type="PhosphoSitePlus" id="P07825"/>
<dbReference type="jPOST" id="P07825"/>
<dbReference type="PaxDb" id="10116-ENSRNOP00000013724"/>
<dbReference type="GeneID" id="24804"/>
<dbReference type="KEGG" id="rno:24804"/>
<dbReference type="UCSC" id="RGD:3802">
    <property type="organism name" value="rat"/>
</dbReference>
<dbReference type="AGR" id="RGD:3802"/>
<dbReference type="CTD" id="6855"/>
<dbReference type="RGD" id="3802">
    <property type="gene designation" value="Syp"/>
</dbReference>
<dbReference type="eggNOG" id="ENOG502QT4W">
    <property type="taxonomic scope" value="Eukaryota"/>
</dbReference>
<dbReference type="InParanoid" id="P07825"/>
<dbReference type="OrthoDB" id="77847at9989"/>
<dbReference type="PhylomeDB" id="P07825"/>
<dbReference type="PRO" id="PR:P07825"/>
<dbReference type="Proteomes" id="UP000002494">
    <property type="component" value="Unplaced"/>
</dbReference>
<dbReference type="GO" id="GO:0060076">
    <property type="term" value="C:excitatory synapse"/>
    <property type="evidence" value="ECO:0000314"/>
    <property type="project" value="BHF-UCL"/>
</dbReference>
<dbReference type="GO" id="GO:0016020">
    <property type="term" value="C:membrane"/>
    <property type="evidence" value="ECO:0000266"/>
    <property type="project" value="RGD"/>
</dbReference>
<dbReference type="GO" id="GO:0031594">
    <property type="term" value="C:neuromuscular junction"/>
    <property type="evidence" value="ECO:0000266"/>
    <property type="project" value="RGD"/>
</dbReference>
<dbReference type="GO" id="GO:0043005">
    <property type="term" value="C:neuron projection"/>
    <property type="evidence" value="ECO:0000266"/>
    <property type="project" value="RGD"/>
</dbReference>
<dbReference type="GO" id="GO:0044306">
    <property type="term" value="C:neuron projection terminus"/>
    <property type="evidence" value="ECO:0000314"/>
    <property type="project" value="RGD"/>
</dbReference>
<dbReference type="GO" id="GO:0044309">
    <property type="term" value="C:neuron spine"/>
    <property type="evidence" value="ECO:0000314"/>
    <property type="project" value="UniProtKB"/>
</dbReference>
<dbReference type="GO" id="GO:0048471">
    <property type="term" value="C:perinuclear region of cytoplasm"/>
    <property type="evidence" value="ECO:0000266"/>
    <property type="project" value="RGD"/>
</dbReference>
<dbReference type="GO" id="GO:0014069">
    <property type="term" value="C:postsynaptic density"/>
    <property type="evidence" value="ECO:0000314"/>
    <property type="project" value="UniProtKB"/>
</dbReference>
<dbReference type="GO" id="GO:0098793">
    <property type="term" value="C:presynapse"/>
    <property type="evidence" value="ECO:0000266"/>
    <property type="project" value="RGD"/>
</dbReference>
<dbReference type="GO" id="GO:0048786">
    <property type="term" value="C:presynaptic active zone"/>
    <property type="evidence" value="ECO:0000314"/>
    <property type="project" value="MGI"/>
</dbReference>
<dbReference type="GO" id="GO:0042734">
    <property type="term" value="C:presynaptic membrane"/>
    <property type="evidence" value="ECO:0000266"/>
    <property type="project" value="RGD"/>
</dbReference>
<dbReference type="GO" id="GO:0032991">
    <property type="term" value="C:protein-containing complex"/>
    <property type="evidence" value="ECO:0000314"/>
    <property type="project" value="RGD"/>
</dbReference>
<dbReference type="GO" id="GO:0098685">
    <property type="term" value="C:Schaffer collateral - CA1 synapse"/>
    <property type="evidence" value="ECO:0000266"/>
    <property type="project" value="RGD"/>
</dbReference>
<dbReference type="GO" id="GO:0045202">
    <property type="term" value="C:synapse"/>
    <property type="evidence" value="ECO:0000266"/>
    <property type="project" value="RGD"/>
</dbReference>
<dbReference type="GO" id="GO:0008021">
    <property type="term" value="C:synaptic vesicle"/>
    <property type="evidence" value="ECO:0000314"/>
    <property type="project" value="ParkinsonsUK-UCL"/>
</dbReference>
<dbReference type="GO" id="GO:0030672">
    <property type="term" value="C:synaptic vesicle membrane"/>
    <property type="evidence" value="ECO:0000314"/>
    <property type="project" value="CAFA"/>
</dbReference>
<dbReference type="GO" id="GO:0043195">
    <property type="term" value="C:terminal bouton"/>
    <property type="evidence" value="ECO:0007005"/>
    <property type="project" value="ParkinsonsUK-UCL"/>
</dbReference>
<dbReference type="GO" id="GO:0015485">
    <property type="term" value="F:cholesterol binding"/>
    <property type="evidence" value="ECO:0000266"/>
    <property type="project" value="RGD"/>
</dbReference>
<dbReference type="GO" id="GO:0042802">
    <property type="term" value="F:identical protein binding"/>
    <property type="evidence" value="ECO:0000266"/>
    <property type="project" value="RGD"/>
</dbReference>
<dbReference type="GO" id="GO:0019904">
    <property type="term" value="F:protein domain specific binding"/>
    <property type="evidence" value="ECO:0000353"/>
    <property type="project" value="RGD"/>
</dbReference>
<dbReference type="GO" id="GO:0044877">
    <property type="term" value="F:protein-containing complex binding"/>
    <property type="evidence" value="ECO:0000353"/>
    <property type="project" value="RGD"/>
</dbReference>
<dbReference type="GO" id="GO:0042169">
    <property type="term" value="F:SH2 domain binding"/>
    <property type="evidence" value="ECO:0000266"/>
    <property type="project" value="RGD"/>
</dbReference>
<dbReference type="GO" id="GO:0000149">
    <property type="term" value="F:SNARE binding"/>
    <property type="evidence" value="ECO:0000353"/>
    <property type="project" value="UniProtKB"/>
</dbReference>
<dbReference type="GO" id="GO:0017075">
    <property type="term" value="F:syntaxin-1 binding"/>
    <property type="evidence" value="ECO:0000314"/>
    <property type="project" value="MGI"/>
</dbReference>
<dbReference type="GO" id="GO:0006897">
    <property type="term" value="P:endocytosis"/>
    <property type="evidence" value="ECO:0000315"/>
    <property type="project" value="UniProtKB"/>
</dbReference>
<dbReference type="GO" id="GO:0050804">
    <property type="term" value="P:modulation of chemical synaptic transmission"/>
    <property type="evidence" value="ECO:0000266"/>
    <property type="project" value="RGD"/>
</dbReference>
<dbReference type="GO" id="GO:0048169">
    <property type="term" value="P:regulation of long-term neuronal synaptic plasticity"/>
    <property type="evidence" value="ECO:0000266"/>
    <property type="project" value="RGD"/>
</dbReference>
<dbReference type="GO" id="GO:0048168">
    <property type="term" value="P:regulation of neuronal synaptic plasticity"/>
    <property type="evidence" value="ECO:0000318"/>
    <property type="project" value="GO_Central"/>
</dbReference>
<dbReference type="GO" id="GO:2000474">
    <property type="term" value="P:regulation of opioid receptor signaling pathway"/>
    <property type="evidence" value="ECO:0000314"/>
    <property type="project" value="UniProtKB"/>
</dbReference>
<dbReference type="GO" id="GO:0048172">
    <property type="term" value="P:regulation of short-term neuronal synaptic plasticity"/>
    <property type="evidence" value="ECO:0000266"/>
    <property type="project" value="RGD"/>
</dbReference>
<dbReference type="GO" id="GO:0010807">
    <property type="term" value="P:regulation of synaptic vesicle priming"/>
    <property type="evidence" value="ECO:0000266"/>
    <property type="project" value="RGD"/>
</dbReference>
<dbReference type="GO" id="GO:1904645">
    <property type="term" value="P:response to amyloid-beta"/>
    <property type="evidence" value="ECO:0000270"/>
    <property type="project" value="RGD"/>
</dbReference>
<dbReference type="InterPro" id="IPR008253">
    <property type="entry name" value="Marvel"/>
</dbReference>
<dbReference type="InterPro" id="IPR001285">
    <property type="entry name" value="Synaptophysin/porin"/>
</dbReference>
<dbReference type="PANTHER" id="PTHR10306">
    <property type="entry name" value="SYNAPTOPHYSIN"/>
    <property type="match status" value="1"/>
</dbReference>
<dbReference type="PANTHER" id="PTHR10306:SF10">
    <property type="entry name" value="SYNAPTOPHYSIN"/>
    <property type="match status" value="1"/>
</dbReference>
<dbReference type="Pfam" id="PF01284">
    <property type="entry name" value="MARVEL"/>
    <property type="match status" value="1"/>
</dbReference>
<dbReference type="PRINTS" id="PR00220">
    <property type="entry name" value="SYNAPTOPHYSN"/>
</dbReference>
<dbReference type="PROSITE" id="PS51225">
    <property type="entry name" value="MARVEL"/>
    <property type="match status" value="1"/>
</dbReference>
<dbReference type="PROSITE" id="PS00604">
    <property type="entry name" value="SYNAPTOP"/>
    <property type="match status" value="1"/>
</dbReference>
<evidence type="ECO:0000250" key="1"/>
<evidence type="ECO:0000250" key="2">
    <source>
        <dbReference type="UniProtKB" id="P08247"/>
    </source>
</evidence>
<evidence type="ECO:0000250" key="3">
    <source>
        <dbReference type="UniProtKB" id="Q62277"/>
    </source>
</evidence>
<evidence type="ECO:0000255" key="4"/>
<evidence type="ECO:0000255" key="5">
    <source>
        <dbReference type="PROSITE-ProRule" id="PRU00581"/>
    </source>
</evidence>
<evidence type="ECO:0000256" key="6">
    <source>
        <dbReference type="SAM" id="MobiDB-lite"/>
    </source>
</evidence>
<evidence type="ECO:0000269" key="7">
    <source>
    </source>
</evidence>
<evidence type="ECO:0000269" key="8">
    <source>
    </source>
</evidence>
<evidence type="ECO:0000269" key="9">
    <source>
    </source>
</evidence>
<evidence type="ECO:0000305" key="10"/>
<evidence type="ECO:0007744" key="11">
    <source>
    </source>
</evidence>
<evidence type="ECO:0007829" key="12">
    <source>
        <dbReference type="PDB" id="9B8O"/>
    </source>
</evidence>
<proteinExistence type="evidence at protein level"/>
<organism>
    <name type="scientific">Rattus norvegicus</name>
    <name type="common">Rat</name>
    <dbReference type="NCBI Taxonomy" id="10116"/>
    <lineage>
        <taxon>Eukaryota</taxon>
        <taxon>Metazoa</taxon>
        <taxon>Chordata</taxon>
        <taxon>Craniata</taxon>
        <taxon>Vertebrata</taxon>
        <taxon>Euteleostomi</taxon>
        <taxon>Mammalia</taxon>
        <taxon>Eutheria</taxon>
        <taxon>Euarchontoglires</taxon>
        <taxon>Glires</taxon>
        <taxon>Rodentia</taxon>
        <taxon>Myomorpha</taxon>
        <taxon>Muroidea</taxon>
        <taxon>Muridae</taxon>
        <taxon>Murinae</taxon>
        <taxon>Rattus</taxon>
    </lineage>
</organism>
<protein>
    <recommendedName>
        <fullName>Synaptophysin</fullName>
    </recommendedName>
    <alternativeName>
        <fullName>Major synaptic vesicle protein p38</fullName>
    </alternativeName>
</protein>
<keyword id="KW-0002">3D-structure</keyword>
<keyword id="KW-0106">Calcium</keyword>
<keyword id="KW-0968">Cytoplasmic vesicle</keyword>
<keyword id="KW-0903">Direct protein sequencing</keyword>
<keyword id="KW-0325">Glycoprotein</keyword>
<keyword id="KW-0472">Membrane</keyword>
<keyword id="KW-0597">Phosphoprotein</keyword>
<keyword id="KW-1185">Reference proteome</keyword>
<keyword id="KW-0677">Repeat</keyword>
<keyword id="KW-0770">Synapse</keyword>
<keyword id="KW-0771">Synaptosome</keyword>
<keyword id="KW-0812">Transmembrane</keyword>
<keyword id="KW-1133">Transmembrane helix</keyword>
<keyword id="KW-0832">Ubl conjugation</keyword>
<feature type="chain" id="PRO_0000179163" description="Synaptophysin">
    <location>
        <begin position="1"/>
        <end position="307"/>
    </location>
</feature>
<feature type="topological domain" description="Cytoplasmic" evidence="4">
    <location>
        <begin position="1"/>
        <end position="19"/>
    </location>
</feature>
<feature type="transmembrane region" description="Helical" evidence="4">
    <location>
        <begin position="20"/>
        <end position="43"/>
    </location>
</feature>
<feature type="topological domain" description="Vesicular" evidence="4">
    <location>
        <begin position="44"/>
        <end position="101"/>
    </location>
</feature>
<feature type="transmembrane region" description="Helical" evidence="4">
    <location>
        <begin position="102"/>
        <end position="125"/>
    </location>
</feature>
<feature type="topological domain" description="Cytoplasmic" evidence="4">
    <location>
        <begin position="126"/>
        <end position="132"/>
    </location>
</feature>
<feature type="transmembrane region" description="Helical" evidence="4">
    <location>
        <begin position="133"/>
        <end position="156"/>
    </location>
</feature>
<feature type="topological domain" description="Vesicular" evidence="4">
    <location>
        <begin position="157"/>
        <end position="194"/>
    </location>
</feature>
<feature type="transmembrane region" description="Helical" evidence="4">
    <location>
        <begin position="195"/>
        <end position="218"/>
    </location>
</feature>
<feature type="topological domain" description="Cytoplasmic" evidence="4">
    <location>
        <begin position="219"/>
        <end position="307"/>
    </location>
</feature>
<feature type="domain" description="MARVEL" evidence="5">
    <location>
        <begin position="15"/>
        <end position="222"/>
    </location>
</feature>
<feature type="region of interest" description="Disordered" evidence="6">
    <location>
        <begin position="233"/>
        <end position="307"/>
    </location>
</feature>
<feature type="region of interest" description="Repeats, Gly-rich">
    <location>
        <begin position="249"/>
        <end position="298"/>
    </location>
</feature>
<feature type="compositionally biased region" description="Gly residues" evidence="6">
    <location>
        <begin position="248"/>
        <end position="258"/>
    </location>
</feature>
<feature type="compositionally biased region" description="Low complexity" evidence="6">
    <location>
        <begin position="259"/>
        <end position="276"/>
    </location>
</feature>
<feature type="compositionally biased region" description="Gly residues" evidence="6">
    <location>
        <begin position="277"/>
        <end position="296"/>
    </location>
</feature>
<feature type="modified residue" description="Phosphotyrosine" evidence="11">
    <location>
        <position position="75"/>
    </location>
</feature>
<feature type="modified residue" description="Phosphothreonine" evidence="4">
    <location>
        <position position="221"/>
    </location>
</feature>
<feature type="modified residue" description="Phosphotyrosine" evidence="4">
    <location>
        <position position="273"/>
    </location>
</feature>
<feature type="modified residue" description="Phosphotyrosine" evidence="4">
    <location>
        <position position="289"/>
    </location>
</feature>
<feature type="glycosylation site" description="N-linked (GlcNAc...) asparagine" evidence="4">
    <location>
        <position position="53"/>
    </location>
</feature>
<feature type="helix" evidence="12">
    <location>
        <begin position="13"/>
        <end position="17"/>
    </location>
</feature>
<feature type="helix" evidence="12">
    <location>
        <begin position="19"/>
        <end position="29"/>
    </location>
</feature>
<feature type="turn" evidence="12">
    <location>
        <begin position="30"/>
        <end position="32"/>
    </location>
</feature>
<feature type="helix" evidence="12">
    <location>
        <begin position="33"/>
        <end position="39"/>
    </location>
</feature>
<feature type="strand" evidence="12">
    <location>
        <begin position="42"/>
        <end position="50"/>
    </location>
</feature>
<feature type="helix" evidence="12">
    <location>
        <begin position="54"/>
        <end position="56"/>
    </location>
</feature>
<feature type="strand" evidence="12">
    <location>
        <begin position="58"/>
        <end position="66"/>
    </location>
</feature>
<feature type="helix" evidence="12">
    <location>
        <begin position="71"/>
        <end position="73"/>
    </location>
</feature>
<feature type="strand" evidence="12">
    <location>
        <begin position="75"/>
        <end position="79"/>
    </location>
</feature>
<feature type="strand" evidence="12">
    <location>
        <begin position="86"/>
        <end position="90"/>
    </location>
</feature>
<feature type="helix" evidence="12">
    <location>
        <begin position="96"/>
        <end position="122"/>
    </location>
</feature>
<feature type="helix" evidence="12">
    <location>
        <begin position="124"/>
        <end position="128"/>
    </location>
</feature>
<feature type="helix" evidence="12">
    <location>
        <begin position="129"/>
        <end position="131"/>
    </location>
</feature>
<feature type="helix" evidence="12">
    <location>
        <begin position="132"/>
        <end position="166"/>
    </location>
</feature>
<feature type="helix" evidence="12">
    <location>
        <begin position="168"/>
        <end position="174"/>
    </location>
</feature>
<feature type="turn" evidence="12">
    <location>
        <begin position="176"/>
        <end position="179"/>
    </location>
</feature>
<feature type="strand" evidence="12">
    <location>
        <begin position="180"/>
        <end position="182"/>
    </location>
</feature>
<feature type="strand" evidence="12">
    <location>
        <begin position="184"/>
        <end position="187"/>
    </location>
</feature>
<feature type="helix" evidence="12">
    <location>
        <begin position="194"/>
        <end position="220"/>
    </location>
</feature>
<sequence>MDVVNQLVAGGQFRVVKEPLGFVKVLQWVFAIFAFATCGSYTGELRLSVECANKTESALNIEVEFEYPFRLHQVYFDAPSCVKGGTTKIFLVGDYSSSAEFFVTVAVFAFLYSMGALATYIFLQNKYRENNKGPMMDFLATAVFAFMWLVSSSAWAKGLSDVKMATDPENIIKEMPMCRQTGNTCKELRDPVTSGLNTSVVFGFLNLVLWVGNLWFVFKETGWAAPFMRAPPGAPEKQPAPGDAYGDAGYGQGPGGYGPQDSYGPQGGYQPDYGQPASGGGGYGPQGDYGQQGYGQQGAPTSFSNQM</sequence>
<gene>
    <name type="primary">Syp</name>
</gene>
<accession>P07825</accession>
<accession>Q499R3</accession>
<name>SYPH_RAT</name>
<comment type="function">
    <text evidence="1">Possibly involved in structural functions as organizing other membrane components or in targeting the vesicles to the plasma membrane. Involved in the regulation of short-term and long-term synaptic plasticity (By similarity).</text>
</comment>
<comment type="subunit">
    <text evidence="2 7">Homohexamer or homotetramer. Interacts with SRCIN1 (By similarity). Interacts with VAMP2; the interaction is inhibited by interaction of VAPM2 with SEPT8 (PubMed:19196426).</text>
</comment>
<comment type="interaction">
    <interactant intactId="EBI-976085">
        <id>P07825</id>
    </interactant>
    <interactant intactId="EBI-15348306">
        <id>Q5XIE8</id>
        <label>Itm2b</label>
    </interactant>
    <organismsDiffer>false</organismsDiffer>
    <experiments>4</experiments>
</comment>
<comment type="interaction">
    <interactant intactId="EBI-976085">
        <id>P07825</id>
    </interactant>
    <interactant intactId="EBI-4392569">
        <id>P33535</id>
        <label>Oprm1</label>
    </interactant>
    <organismsDiffer>false</organismsDiffer>
    <experiments>8</experiments>
</comment>
<comment type="interaction">
    <interactant intactId="EBI-976085">
        <id>P07825</id>
    </interactant>
    <interactant intactId="EBI-775607">
        <id>Q9QWI6-2</id>
        <label>Srcin1</label>
    </interactant>
    <organismsDiffer>true</organismsDiffer>
    <experiments>2</experiments>
</comment>
<comment type="subcellular location">
    <subcellularLocation>
        <location evidence="3">Cytoplasmic vesicle</location>
        <location evidence="3">Secretory vesicle</location>
        <location evidence="3">Synaptic vesicle membrane</location>
        <topology evidence="4">Multi-pass membrane protein</topology>
    </subcellularLocation>
    <subcellularLocation>
        <location evidence="2">Synapse</location>
        <location evidence="2">Synaptosome</location>
    </subcellularLocation>
</comment>
<comment type="tissue specificity">
    <text evidence="9">Expressed in the brain with expression in the cerebrum and the cerebellum.</text>
</comment>
<comment type="developmental stage">
    <text evidence="9">Expressed in the spinal cord of newborn animals.</text>
</comment>
<comment type="domain">
    <text>The calcium-binding activity is thought to be localized in the cytoplasmic tail of the protein.</text>
</comment>
<comment type="PTM">
    <text>Ubiquitinated; mediated by SIAH1 or SIAH2 and leading to its subsequent proteasomal degradation.</text>
</comment>
<comment type="PTM">
    <text evidence="8">Phosphorylated by SRC.</text>
</comment>
<comment type="similarity">
    <text evidence="10">Belongs to the synaptophysin/synaptobrevin family.</text>
</comment>
<reference key="1">
    <citation type="journal article" date="1987" name="EMBO J.">
        <title>Synaptophysin: molecular organization and mRNA expression as determined from cloned cDNA.</title>
        <authorList>
            <person name="Leube R.E."/>
            <person name="Kaiser P."/>
            <person name="Seiter A."/>
            <person name="Zimbelmann R."/>
            <person name="Franke W.W."/>
            <person name="Rehm H."/>
            <person name="Knaus P."/>
            <person name="Prior P."/>
            <person name="Betz H."/>
            <person name="Reinke H."/>
            <person name="Beyreuther K."/>
            <person name="Wiedenmann B."/>
        </authorList>
    </citation>
    <scope>NUCLEOTIDE SEQUENCE [MRNA]</scope>
    <scope>TISSUE SPECIFICITY</scope>
    <scope>DEVELOPMENTAL STAGE</scope>
</reference>
<reference key="2">
    <citation type="journal article" date="1987" name="Nucleic Acids Res.">
        <title>The cDNA and derived amino acid sequences for rat and human synaptophysin.</title>
        <authorList>
            <person name="Suedhof T.C."/>
            <person name="Lottspeich F."/>
            <person name="Greengard P."/>
            <person name="Mehl E."/>
            <person name="Jahn R."/>
        </authorList>
    </citation>
    <scope>NUCLEOTIDE SEQUENCE [MRNA]</scope>
</reference>
<reference key="3">
    <citation type="journal article" date="1987" name="Science">
        <title>A synaptic vesicle protein with a novel cytoplasmic domain and four transmembrane regions.</title>
        <authorList>
            <person name="Suedhof T.C."/>
            <person name="Lottspeich F."/>
            <person name="Greengard P."/>
            <person name="Mehl E."/>
            <person name="Jahn R."/>
        </authorList>
    </citation>
    <scope>NUCLEOTIDE SEQUENCE [MRNA]</scope>
    <scope>PARTIAL PROTEIN SEQUENCE</scope>
</reference>
<reference key="4">
    <citation type="journal article" date="1991" name="Gene">
        <title>The synaptophysin-encoding gene in rat and man is specifically transcribed in neuroendocrine cells.</title>
        <authorList>
            <person name="Bargou R.C.E.F."/>
            <person name="Leube R.E."/>
        </authorList>
    </citation>
    <scope>NUCLEOTIDE SEQUENCE [GENOMIC DNA]</scope>
</reference>
<reference key="5">
    <citation type="journal article" date="2004" name="Genome Res.">
        <title>The status, quality, and expansion of the NIH full-length cDNA project: the Mammalian Gene Collection (MGC).</title>
        <authorList>
            <consortium name="The MGC Project Team"/>
        </authorList>
    </citation>
    <scope>NUCLEOTIDE SEQUENCE [LARGE SCALE MRNA]</scope>
    <source>
        <tissue>Prostate</tissue>
    </source>
</reference>
<reference key="6">
    <citation type="journal article" date="1987" name="J. Cell Biol.">
        <title>Cloning and sequence analysis of cDNA encoding p38, a major synaptic vesicle protein.</title>
        <authorList>
            <person name="Buckley K.M."/>
            <person name="Floor E."/>
            <person name="Kelly R.B."/>
        </authorList>
    </citation>
    <scope>NUCLEOTIDE SEQUENCE [MRNA] OF 13-307</scope>
    <source>
        <tissue>Brain</tissue>
    </source>
</reference>
<reference key="7">
    <citation type="journal article" date="2002" name="J. Biol. Chem.">
        <title>Regulation of synaptophysin degradation by mammalian homologues of Seven in Absentia.</title>
        <authorList>
            <person name="Wheeler T.C."/>
            <person name="Chin L.-S."/>
            <person name="Li Y."/>
            <person name="Roudabush F.L."/>
            <person name="Li L."/>
        </authorList>
    </citation>
    <scope>INTERACTION WITH SIAH1 AND SIAH2</scope>
    <scope>DEGRADATION</scope>
    <source>
        <strain>Sprague-Dawley</strain>
    </source>
</reference>
<reference key="8">
    <citation type="journal article" date="2009" name="J. Neurochem.">
        <title>Sept8 controls the binding of vesicle-associated membrane protein 2 to synaptophysin.</title>
        <authorList>
            <person name="Ito H."/>
            <person name="Atsuzawa K."/>
            <person name="Morishita R."/>
            <person name="Usuda N."/>
            <person name="Sudo K."/>
            <person name="Iwamoto I."/>
            <person name="Mizutani K."/>
            <person name="Katoh-Semba R."/>
            <person name="Nozawa Y."/>
            <person name="Asano T."/>
            <person name="Nagata K."/>
        </authorList>
    </citation>
    <scope>INTERACTION WITH VAMP2</scope>
</reference>
<reference key="9">
    <citation type="journal article" date="2012" name="Nat. Commun.">
        <title>Quantitative maps of protein phosphorylation sites across 14 different rat organs and tissues.</title>
        <authorList>
            <person name="Lundby A."/>
            <person name="Secher A."/>
            <person name="Lage K."/>
            <person name="Nordsborg N.B."/>
            <person name="Dmytriyev A."/>
            <person name="Lundby C."/>
            <person name="Olsen J.V."/>
        </authorList>
    </citation>
    <scope>PHOSPHORYLATION [LARGE SCALE ANALYSIS] AT TYR-75</scope>
    <scope>IDENTIFICATION BY MASS SPECTROMETRY [LARGE SCALE ANALYSIS]</scope>
</reference>
<reference key="10">
    <citation type="journal article" date="2015" name="FEBS Lett.">
        <title>The N2-Src neuronal splice variant of C-Src has altered SH3 domain ligand specificity and a higher constitutive activity than N1-Src.</title>
        <authorList>
            <person name="Keenan S."/>
            <person name="Lewis P.A."/>
            <person name="Wetherill S.J."/>
            <person name="Dunning C.J."/>
            <person name="Evans G.J."/>
        </authorList>
    </citation>
    <scope>PHOSPHORYLATION</scope>
</reference>